<accession>Q2NES6</accession>
<protein>
    <recommendedName>
        <fullName evidence="1">Probable phosphoglucosamine mutase</fullName>
        <ecNumber evidence="1">5.4.2.10</ecNumber>
    </recommendedName>
</protein>
<gene>
    <name evidence="1" type="primary">glmM</name>
    <name type="ordered locus">Msp_1300</name>
</gene>
<sequence>MKSIPKLFGTSGIRGKYQEEITLELALDVARALAKYIGGKNKKVVIGRDTRTSGKIIENVMSAGLQQSGCDVLLLGMVPTPVVGYATLKKEADAGIMITASHNPSQYNGIKLWNSDGLAYKQDQERTIEKLVYEKDFNIVKWNEIGKEYDISSFKDKYIDDIVAKSGINPLKPLKVVVDCACGAGSYLSPEALRRAGMNVITLNAQPDGSFPGRRPEPNEANLGELMKTVKALNADVGLAHDGDADRMIAVDENGNLSDFDKLLTIMAKEFGGTVVTTVDASACLDIQMQKIGGNVLRTPVGDVHVAESINKNKGTFGGEPSGTWLHPDFCMCPDGLLSGLRIVRTIQKNGKLSKQLDAIENYPTIRQKVTCENSKKKTVMSIVEEKFEEEFDDVKEILTIDGVRISFEDDSWVLIRPSGTEPYIRITAEGKTQEHLNSIEKISNEFLNNII</sequence>
<name>GLMM_METST</name>
<proteinExistence type="inferred from homology"/>
<feature type="chain" id="PRO_0000337821" description="Probable phosphoglucosamine mutase">
    <location>
        <begin position="1"/>
        <end position="452"/>
    </location>
</feature>
<feature type="active site" description="Phosphoserine intermediate" evidence="1">
    <location>
        <position position="101"/>
    </location>
</feature>
<feature type="binding site" description="via phosphate group" evidence="1">
    <location>
        <position position="101"/>
    </location>
    <ligand>
        <name>Mg(2+)</name>
        <dbReference type="ChEBI" id="CHEBI:18420"/>
    </ligand>
</feature>
<feature type="binding site" evidence="1">
    <location>
        <position position="242"/>
    </location>
    <ligand>
        <name>Mg(2+)</name>
        <dbReference type="ChEBI" id="CHEBI:18420"/>
    </ligand>
</feature>
<feature type="binding site" evidence="1">
    <location>
        <position position="244"/>
    </location>
    <ligand>
        <name>Mg(2+)</name>
        <dbReference type="ChEBI" id="CHEBI:18420"/>
    </ligand>
</feature>
<feature type="binding site" evidence="1">
    <location>
        <position position="246"/>
    </location>
    <ligand>
        <name>Mg(2+)</name>
        <dbReference type="ChEBI" id="CHEBI:18420"/>
    </ligand>
</feature>
<feature type="modified residue" description="Phosphoserine" evidence="1">
    <location>
        <position position="101"/>
    </location>
</feature>
<evidence type="ECO:0000255" key="1">
    <source>
        <dbReference type="HAMAP-Rule" id="MF_01554"/>
    </source>
</evidence>
<dbReference type="EC" id="5.4.2.10" evidence="1"/>
<dbReference type="EMBL" id="CP000102">
    <property type="protein sequence ID" value="ABC57677.1"/>
    <property type="molecule type" value="Genomic_DNA"/>
</dbReference>
<dbReference type="RefSeq" id="WP_011406876.1">
    <property type="nucleotide sequence ID" value="NC_007681.1"/>
</dbReference>
<dbReference type="SMR" id="Q2NES6"/>
<dbReference type="STRING" id="339860.Msp_1300"/>
<dbReference type="GeneID" id="41325870"/>
<dbReference type="KEGG" id="mst:Msp_1300"/>
<dbReference type="eggNOG" id="arCOG00767">
    <property type="taxonomic scope" value="Archaea"/>
</dbReference>
<dbReference type="HOGENOM" id="CLU_016950_7_1_2"/>
<dbReference type="OrthoDB" id="10363at2157"/>
<dbReference type="Proteomes" id="UP000001931">
    <property type="component" value="Chromosome"/>
</dbReference>
<dbReference type="GO" id="GO:0000287">
    <property type="term" value="F:magnesium ion binding"/>
    <property type="evidence" value="ECO:0007669"/>
    <property type="project" value="UniProtKB-UniRule"/>
</dbReference>
<dbReference type="GO" id="GO:0008966">
    <property type="term" value="F:phosphoglucosamine mutase activity"/>
    <property type="evidence" value="ECO:0007669"/>
    <property type="project" value="UniProtKB-UniRule"/>
</dbReference>
<dbReference type="GO" id="GO:0005975">
    <property type="term" value="P:carbohydrate metabolic process"/>
    <property type="evidence" value="ECO:0007669"/>
    <property type="project" value="InterPro"/>
</dbReference>
<dbReference type="CDD" id="cd03087">
    <property type="entry name" value="PGM_like1"/>
    <property type="match status" value="1"/>
</dbReference>
<dbReference type="FunFam" id="3.40.120.10:FF:000001">
    <property type="entry name" value="Phosphoglucosamine mutase"/>
    <property type="match status" value="1"/>
</dbReference>
<dbReference type="FunFam" id="3.40.120.10:FF:000003">
    <property type="entry name" value="Phosphoglucosamine mutase"/>
    <property type="match status" value="1"/>
</dbReference>
<dbReference type="Gene3D" id="3.40.120.10">
    <property type="entry name" value="Alpha-D-Glucose-1,6-Bisphosphate, subunit A, domain 3"/>
    <property type="match status" value="3"/>
</dbReference>
<dbReference type="Gene3D" id="3.30.310.50">
    <property type="entry name" value="Alpha-D-phosphohexomutase, C-terminal domain"/>
    <property type="match status" value="1"/>
</dbReference>
<dbReference type="HAMAP" id="MF_01554_A">
    <property type="entry name" value="GlmM_A"/>
    <property type="match status" value="1"/>
</dbReference>
<dbReference type="InterPro" id="IPR005844">
    <property type="entry name" value="A-D-PHexomutase_a/b/a-I"/>
</dbReference>
<dbReference type="InterPro" id="IPR016055">
    <property type="entry name" value="A-D-PHexomutase_a/b/a-I/II/III"/>
</dbReference>
<dbReference type="InterPro" id="IPR005845">
    <property type="entry name" value="A-D-PHexomutase_a/b/a-II"/>
</dbReference>
<dbReference type="InterPro" id="IPR005846">
    <property type="entry name" value="A-D-PHexomutase_a/b/a-III"/>
</dbReference>
<dbReference type="InterPro" id="IPR005843">
    <property type="entry name" value="A-D-PHexomutase_C"/>
</dbReference>
<dbReference type="InterPro" id="IPR036900">
    <property type="entry name" value="A-D-PHexomutase_C_sf"/>
</dbReference>
<dbReference type="InterPro" id="IPR016066">
    <property type="entry name" value="A-D-PHexomutase_CS"/>
</dbReference>
<dbReference type="InterPro" id="IPR005841">
    <property type="entry name" value="Alpha-D-phosphohexomutase_SF"/>
</dbReference>
<dbReference type="InterPro" id="IPR023666">
    <property type="entry name" value="GlmM_arc"/>
</dbReference>
<dbReference type="InterPro" id="IPR024086">
    <property type="entry name" value="GlmM_arc-type"/>
</dbReference>
<dbReference type="NCBIfam" id="TIGR03990">
    <property type="entry name" value="Arch_GlmM"/>
    <property type="match status" value="1"/>
</dbReference>
<dbReference type="PANTHER" id="PTHR43771">
    <property type="entry name" value="PHOSPHOMANNOMUTASE"/>
    <property type="match status" value="1"/>
</dbReference>
<dbReference type="PANTHER" id="PTHR43771:SF1">
    <property type="entry name" value="PHOSPHOMANNOMUTASE"/>
    <property type="match status" value="1"/>
</dbReference>
<dbReference type="Pfam" id="PF02878">
    <property type="entry name" value="PGM_PMM_I"/>
    <property type="match status" value="1"/>
</dbReference>
<dbReference type="Pfam" id="PF02879">
    <property type="entry name" value="PGM_PMM_II"/>
    <property type="match status" value="1"/>
</dbReference>
<dbReference type="Pfam" id="PF02880">
    <property type="entry name" value="PGM_PMM_III"/>
    <property type="match status" value="1"/>
</dbReference>
<dbReference type="Pfam" id="PF00408">
    <property type="entry name" value="PGM_PMM_IV"/>
    <property type="match status" value="1"/>
</dbReference>
<dbReference type="PRINTS" id="PR00509">
    <property type="entry name" value="PGMPMM"/>
</dbReference>
<dbReference type="SUPFAM" id="SSF55957">
    <property type="entry name" value="Phosphoglucomutase, C-terminal domain"/>
    <property type="match status" value="1"/>
</dbReference>
<dbReference type="SUPFAM" id="SSF53738">
    <property type="entry name" value="Phosphoglucomutase, first 3 domains"/>
    <property type="match status" value="3"/>
</dbReference>
<dbReference type="PROSITE" id="PS00710">
    <property type="entry name" value="PGM_PMM"/>
    <property type="match status" value="1"/>
</dbReference>
<comment type="function">
    <text evidence="1">Catalyzes the conversion of glucosamine-6-phosphate to glucosamine-1-phosphate.</text>
</comment>
<comment type="catalytic activity">
    <reaction evidence="1">
        <text>alpha-D-glucosamine 1-phosphate = D-glucosamine 6-phosphate</text>
        <dbReference type="Rhea" id="RHEA:23424"/>
        <dbReference type="ChEBI" id="CHEBI:58516"/>
        <dbReference type="ChEBI" id="CHEBI:58725"/>
        <dbReference type="EC" id="5.4.2.10"/>
    </reaction>
</comment>
<comment type="cofactor">
    <cofactor evidence="1">
        <name>Mg(2+)</name>
        <dbReference type="ChEBI" id="CHEBI:18420"/>
    </cofactor>
    <text evidence="1">Binds 1 Mg(2+) ion per subunit.</text>
</comment>
<comment type="PTM">
    <text evidence="1">Activated by phosphorylation.</text>
</comment>
<comment type="similarity">
    <text evidence="1">Belongs to the phosphohexose mutase family.</text>
</comment>
<reference key="1">
    <citation type="journal article" date="2006" name="J. Bacteriol.">
        <title>The genome sequence of Methanosphaera stadtmanae reveals why this human intestinal archaeon is restricted to methanol and H2 for methane formation and ATP synthesis.</title>
        <authorList>
            <person name="Fricke W.F."/>
            <person name="Seedorf H."/>
            <person name="Henne A."/>
            <person name="Kruer M."/>
            <person name="Liesegang H."/>
            <person name="Hedderich R."/>
            <person name="Gottschalk G."/>
            <person name="Thauer R.K."/>
        </authorList>
    </citation>
    <scope>NUCLEOTIDE SEQUENCE [LARGE SCALE GENOMIC DNA]</scope>
    <source>
        <strain>ATCC 43021 / DSM 3091 / JCM 11832 / MCB-3</strain>
    </source>
</reference>
<keyword id="KW-0413">Isomerase</keyword>
<keyword id="KW-0460">Magnesium</keyword>
<keyword id="KW-0479">Metal-binding</keyword>
<keyword id="KW-0597">Phosphoprotein</keyword>
<keyword id="KW-1185">Reference proteome</keyword>
<organism>
    <name type="scientific">Methanosphaera stadtmanae (strain ATCC 43021 / DSM 3091 / JCM 11832 / MCB-3)</name>
    <dbReference type="NCBI Taxonomy" id="339860"/>
    <lineage>
        <taxon>Archaea</taxon>
        <taxon>Methanobacteriati</taxon>
        <taxon>Methanobacteriota</taxon>
        <taxon>Methanomada group</taxon>
        <taxon>Methanobacteria</taxon>
        <taxon>Methanobacteriales</taxon>
        <taxon>Methanobacteriaceae</taxon>
        <taxon>Methanosphaera</taxon>
    </lineage>
</organism>